<gene>
    <name evidence="1" type="primary">lspA</name>
    <name type="ordered locus">Ping_3270</name>
</gene>
<dbReference type="EC" id="3.4.23.36" evidence="1"/>
<dbReference type="EMBL" id="CP000510">
    <property type="protein sequence ID" value="ABM04957.1"/>
    <property type="molecule type" value="Genomic_DNA"/>
</dbReference>
<dbReference type="RefSeq" id="WP_011771509.1">
    <property type="nucleotide sequence ID" value="NC_008709.1"/>
</dbReference>
<dbReference type="SMR" id="A1SZP2"/>
<dbReference type="STRING" id="357804.Ping_3270"/>
<dbReference type="KEGG" id="pin:Ping_3270"/>
<dbReference type="eggNOG" id="COG0597">
    <property type="taxonomic scope" value="Bacteria"/>
</dbReference>
<dbReference type="HOGENOM" id="CLU_083252_4_0_6"/>
<dbReference type="OrthoDB" id="9810259at2"/>
<dbReference type="UniPathway" id="UPA00665"/>
<dbReference type="Proteomes" id="UP000000639">
    <property type="component" value="Chromosome"/>
</dbReference>
<dbReference type="GO" id="GO:0005886">
    <property type="term" value="C:plasma membrane"/>
    <property type="evidence" value="ECO:0007669"/>
    <property type="project" value="UniProtKB-SubCell"/>
</dbReference>
<dbReference type="GO" id="GO:0004190">
    <property type="term" value="F:aspartic-type endopeptidase activity"/>
    <property type="evidence" value="ECO:0007669"/>
    <property type="project" value="UniProtKB-UniRule"/>
</dbReference>
<dbReference type="GO" id="GO:0006508">
    <property type="term" value="P:proteolysis"/>
    <property type="evidence" value="ECO:0007669"/>
    <property type="project" value="UniProtKB-KW"/>
</dbReference>
<dbReference type="HAMAP" id="MF_00161">
    <property type="entry name" value="LspA"/>
    <property type="match status" value="1"/>
</dbReference>
<dbReference type="InterPro" id="IPR001872">
    <property type="entry name" value="Peptidase_A8"/>
</dbReference>
<dbReference type="NCBIfam" id="TIGR00077">
    <property type="entry name" value="lspA"/>
    <property type="match status" value="1"/>
</dbReference>
<dbReference type="PANTHER" id="PTHR33695">
    <property type="entry name" value="LIPOPROTEIN SIGNAL PEPTIDASE"/>
    <property type="match status" value="1"/>
</dbReference>
<dbReference type="PANTHER" id="PTHR33695:SF1">
    <property type="entry name" value="LIPOPROTEIN SIGNAL PEPTIDASE"/>
    <property type="match status" value="1"/>
</dbReference>
<dbReference type="Pfam" id="PF01252">
    <property type="entry name" value="Peptidase_A8"/>
    <property type="match status" value="1"/>
</dbReference>
<dbReference type="PRINTS" id="PR00781">
    <property type="entry name" value="LIPOSIGPTASE"/>
</dbReference>
<dbReference type="PROSITE" id="PS00855">
    <property type="entry name" value="SPASE_II"/>
    <property type="match status" value="1"/>
</dbReference>
<proteinExistence type="inferred from homology"/>
<accession>A1SZP2</accession>
<protein>
    <recommendedName>
        <fullName evidence="1">Lipoprotein signal peptidase</fullName>
        <ecNumber evidence="1">3.4.23.36</ecNumber>
    </recommendedName>
    <alternativeName>
        <fullName evidence="1">Prolipoprotein signal peptidase</fullName>
    </alternativeName>
    <alternativeName>
        <fullName evidence="1">Signal peptidase II</fullName>
        <shortName evidence="1">SPase II</shortName>
    </alternativeName>
</protein>
<sequence>MAEIIEKSGLRWLWLAAIMLALDQVTKYWTIQSLDLYESYEIFSFFSFTYARNYGAAFSFLGDAGGWQRYLFTAIAIVVSSYLVYLLKKNASTDRWINCAYALILSGALGNVVDRMMFGYVIDFLDFDLGFYRWPTFNIADSAIFTGAVIMIFESFFAKQAKPIKQPKGNKNV</sequence>
<name>LSPA_PSYIN</name>
<reference key="1">
    <citation type="journal article" date="2008" name="BMC Genomics">
        <title>Genomics of an extreme psychrophile, Psychromonas ingrahamii.</title>
        <authorList>
            <person name="Riley M."/>
            <person name="Staley J.T."/>
            <person name="Danchin A."/>
            <person name="Wang T.Z."/>
            <person name="Brettin T.S."/>
            <person name="Hauser L.J."/>
            <person name="Land M.L."/>
            <person name="Thompson L.S."/>
        </authorList>
    </citation>
    <scope>NUCLEOTIDE SEQUENCE [LARGE SCALE GENOMIC DNA]</scope>
    <source>
        <strain>DSM 17664 / CCUG 51855 / 37</strain>
    </source>
</reference>
<feature type="chain" id="PRO_1000038815" description="Lipoprotein signal peptidase">
    <location>
        <begin position="1"/>
        <end position="173"/>
    </location>
</feature>
<feature type="transmembrane region" description="Helical" evidence="1">
    <location>
        <begin position="12"/>
        <end position="32"/>
    </location>
</feature>
<feature type="transmembrane region" description="Helical" evidence="1">
    <location>
        <begin position="67"/>
        <end position="87"/>
    </location>
</feature>
<feature type="transmembrane region" description="Helical" evidence="1">
    <location>
        <begin position="102"/>
        <end position="122"/>
    </location>
</feature>
<feature type="transmembrane region" description="Helical" evidence="1">
    <location>
        <begin position="137"/>
        <end position="157"/>
    </location>
</feature>
<feature type="active site" evidence="1">
    <location>
        <position position="123"/>
    </location>
</feature>
<feature type="active site" evidence="1">
    <location>
        <position position="141"/>
    </location>
</feature>
<evidence type="ECO:0000255" key="1">
    <source>
        <dbReference type="HAMAP-Rule" id="MF_00161"/>
    </source>
</evidence>
<organism>
    <name type="scientific">Psychromonas ingrahamii (strain DSM 17664 / CCUG 51855 / 37)</name>
    <dbReference type="NCBI Taxonomy" id="357804"/>
    <lineage>
        <taxon>Bacteria</taxon>
        <taxon>Pseudomonadati</taxon>
        <taxon>Pseudomonadota</taxon>
        <taxon>Gammaproteobacteria</taxon>
        <taxon>Alteromonadales</taxon>
        <taxon>Psychromonadaceae</taxon>
        <taxon>Psychromonas</taxon>
    </lineage>
</organism>
<keyword id="KW-0064">Aspartyl protease</keyword>
<keyword id="KW-0997">Cell inner membrane</keyword>
<keyword id="KW-1003">Cell membrane</keyword>
<keyword id="KW-0378">Hydrolase</keyword>
<keyword id="KW-0472">Membrane</keyword>
<keyword id="KW-0645">Protease</keyword>
<keyword id="KW-1185">Reference proteome</keyword>
<keyword id="KW-0812">Transmembrane</keyword>
<keyword id="KW-1133">Transmembrane helix</keyword>
<comment type="function">
    <text evidence="1">This protein specifically catalyzes the removal of signal peptides from prolipoproteins.</text>
</comment>
<comment type="catalytic activity">
    <reaction evidence="1">
        <text>Release of signal peptides from bacterial membrane prolipoproteins. Hydrolyzes -Xaa-Yaa-Zaa-|-(S,diacylglyceryl)Cys-, in which Xaa is hydrophobic (preferably Leu), and Yaa (Ala or Ser) and Zaa (Gly or Ala) have small, neutral side chains.</text>
        <dbReference type="EC" id="3.4.23.36"/>
    </reaction>
</comment>
<comment type="pathway">
    <text evidence="1">Protein modification; lipoprotein biosynthesis (signal peptide cleavage).</text>
</comment>
<comment type="subcellular location">
    <subcellularLocation>
        <location evidence="1">Cell inner membrane</location>
        <topology evidence="1">Multi-pass membrane protein</topology>
    </subcellularLocation>
</comment>
<comment type="similarity">
    <text evidence="1">Belongs to the peptidase A8 family.</text>
</comment>